<comment type="function">
    <text evidence="1 4 6 7 8 9 10 11">Involved in regulation of NF-kappa-B transcription factor complexes (PubMed:11356851, PubMed:15241416, PubMed:15618216, PubMed:17447895). Inhibits NF-kappa-B activity without affecting its nuclear translocation upon stimulation (PubMed:11356851, PubMed:15241416, PubMed:15618216, PubMed:17447895). Inhibits DNA-binding of RELA and NFKB1/p50, and of the NF-kappa-B p65-p50 heterodimer and the NF-kappa-B p50-p50 homodimer (PubMed:11356851, PubMed:15241416, PubMed:15618216, PubMed:17447895). Also seems to activate NF-kappa-B-mediated transcription (PubMed:11356851, PubMed:15241416, PubMed:15618216, PubMed:17447895). In vitro, upon association with NFKB1/p50 has transcriptional activation activity and, together with NFKB1/p50 and RELA, is recruited to LCN2 promoters (By similarity). Promotes transcription of LCN2 and DEFB4 (By similarity). Is recruited to IL-6 promoters and activates IL-6 but decreases TNF-alpha production in response to LPS (PubMed:11086164, PubMed:25107474). Seems to be involved in the induction of inflammatory genes activated through TLR/IL-1 receptor signaling (PubMed:11086164, PubMed:25107474). Involved in the induction of T helper 17 cells (Th17) differentiation upon recognition of antigen by T cell antigen receptor (TCR) (PubMed:25282160).</text>
</comment>
<comment type="subunit">
    <text evidence="1 6 10">Interacts with NFKB1/p50 (PubMed:11356851). Interacts with RELA (By similarity). Interacts with AKIRIN2 (PubMed:25107474).</text>
</comment>
<comment type="interaction">
    <interactant intactId="EBI-10107924">
        <id>Q9EST8</id>
    </interactant>
    <interactant intactId="EBI-10107866">
        <id>B1AXD8</id>
        <label>Akirin2</label>
    </interactant>
    <organismsDiffer>false</organismsDiffer>
    <experiments>3</experiments>
</comment>
<comment type="subcellular location">
    <subcellularLocation>
        <location evidence="4 5 6 8">Nucleus</location>
    </subcellularLocation>
</comment>
<comment type="alternative products">
    <event type="alternative splicing"/>
    <isoform>
        <id>Q9EST8-1</id>
        <name>1</name>
        <name>MAIL-L</name>
        <sequence type="displayed"/>
    </isoform>
    <isoform>
        <id>Q9EST8-2</id>
        <name>2</name>
        <name>MAIL-S</name>
        <sequence type="described" ref="VSP_032024"/>
    </isoform>
    <isoform>
        <id>Q9EST8-3</id>
        <name>3</name>
        <name>D</name>
        <sequence type="described" ref="VSP_032025"/>
    </isoform>
</comment>
<comment type="tissue specificity">
    <text evidence="6">Expressed in kidney, liver, lung and heart. Expressed at very low levels in skeletal muscle, spleen and brain.</text>
</comment>
<comment type="induction">
    <text evidence="4 5 6 7">By IL-1, LPS, peptidoglycan, bacterial lipoprotein, flagellin, MALP-2, R-848 and CpG DNA, but not by TNF-alpha.</text>
</comment>
<comment type="disruption phenotype">
    <text evidence="7">Mice have splenocytes with defective proliferation in response to LPS but not to anti-CD40, IL-4 and anti-IgM. Though mice grew normally after birth, some of them started to develop atopic dermatitis-like skin lesions with acanthosis and lichenoid changes at the age of 4-5 weeks. All mice developed the disease by the age of 10 weeks. 5-week-old mice show pathological changes in the conjunctiva, including a heavy lymphocyte infiltration into the submucosa and loss of goblet cells in the conjunctival epithelium.</text>
</comment>
<comment type="miscellaneous">
    <molecule>Isoform 1</molecule>
    <text>Major.</text>
</comment>
<comment type="sequence caution" evidence="15">
    <conflict type="frameshift">
        <sequence resource="EMBL-CDS" id="BAE24648"/>
    </conflict>
</comment>
<evidence type="ECO:0000250" key="1">
    <source>
        <dbReference type="UniProtKB" id="Q9BYH8"/>
    </source>
</evidence>
<evidence type="ECO:0000255" key="2">
    <source>
        <dbReference type="PROSITE-ProRule" id="PRU01347"/>
    </source>
</evidence>
<evidence type="ECO:0000256" key="3">
    <source>
        <dbReference type="SAM" id="MobiDB-lite"/>
    </source>
</evidence>
<evidence type="ECO:0000269" key="4">
    <source>
    </source>
</evidence>
<evidence type="ECO:0000269" key="5">
    <source>
    </source>
</evidence>
<evidence type="ECO:0000269" key="6">
    <source>
    </source>
</evidence>
<evidence type="ECO:0000269" key="7">
    <source>
    </source>
</evidence>
<evidence type="ECO:0000269" key="8">
    <source>
    </source>
</evidence>
<evidence type="ECO:0000269" key="9">
    <source>
    </source>
</evidence>
<evidence type="ECO:0000269" key="10">
    <source>
    </source>
</evidence>
<evidence type="ECO:0000269" key="11">
    <source>
    </source>
</evidence>
<evidence type="ECO:0000303" key="12">
    <source>
    </source>
</evidence>
<evidence type="ECO:0000303" key="13">
    <source>
    </source>
</evidence>
<evidence type="ECO:0000303" key="14">
    <source>
    </source>
</evidence>
<evidence type="ECO:0000305" key="15"/>
<reference key="1">
    <citation type="journal article" date="2000" name="FEBS Lett.">
        <title>MAIL, a novel nuclear I kappa B protein that potentiates LPS-induced IL-6 production.</title>
        <authorList>
            <person name="Kitamura H."/>
            <person name="Kanehira K."/>
            <person name="Okita K."/>
            <person name="Morimatsu M."/>
            <person name="Saito M."/>
        </authorList>
    </citation>
    <scope>NUCLEOTIDE SEQUENCE [MRNA] (ISOFORM 1)</scope>
    <scope>FUNCTION</scope>
    <scope>SUBCELLULAR LOCATION</scope>
    <scope>INDUCTION</scope>
    <source>
        <strain>BALB/cJ</strain>
        <tissue>Spleen</tissue>
    </source>
</reference>
<reference key="2">
    <citation type="journal article" date="2001" name="Immunogenetics">
        <title>Genomic organization, chromosomal localization, and promoter analysis of the mouse Mail gene.</title>
        <authorList>
            <person name="Shiina T."/>
            <person name="Morimatsu M."/>
            <person name="Kitamura H."/>
            <person name="Ito T."/>
            <person name="Kidou S."/>
            <person name="Matsubara K."/>
            <person name="Matsuda Y."/>
            <person name="Saito M."/>
            <person name="Syuto B."/>
        </authorList>
    </citation>
    <scope>NUCLEOTIDE SEQUENCE [GENOMIC DNA]</scope>
    <source>
        <strain>129/SvEvTacfBr</strain>
        <tissue>Spleen</tissue>
    </source>
</reference>
<reference key="3">
    <citation type="journal article" date="2001" name="J. Biol. Chem.">
        <title>Isolation of a novel interleukin-1-inducible nuclear protein bearing ankyrin-repeat motifs.</title>
        <authorList>
            <person name="Haruta H."/>
            <person name="Kato A."/>
            <person name="Todokoro K."/>
        </authorList>
    </citation>
    <scope>NUCLEOTIDE SEQUENCE [MRNA] (ISOFORM 1)</scope>
    <scope>SUBCELLULAR LOCATION</scope>
    <scope>INDUCTION</scope>
</reference>
<reference key="4">
    <citation type="journal article" date="2001" name="J. Biol. Chem.">
        <title>A novel IkappaB protein, IkappaB-zeta, induced by proinflammatory stimuli, negatively regulates nuclear factor-kappaB in the nuclei.</title>
        <authorList>
            <person name="Yamazaki S."/>
            <person name="Muta T."/>
            <person name="Takeshige K."/>
        </authorList>
    </citation>
    <scope>NUCLEOTIDE SEQUENCE [MRNA] (ISOFORM 2)</scope>
    <scope>FUNCTION IN NF-KAPPA-B INHIBITION</scope>
    <scope>INTERACTION WITH NFKB1</scope>
    <scope>TISSUE SPECIFICITY</scope>
    <scope>SUBCELLULAR LOCATION</scope>
    <scope>INDUCTION</scope>
</reference>
<reference key="5">
    <citation type="journal article" date="2005" name="Science">
        <title>The transcriptional landscape of the mammalian genome.</title>
        <authorList>
            <person name="Carninci P."/>
            <person name="Kasukawa T."/>
            <person name="Katayama S."/>
            <person name="Gough J."/>
            <person name="Frith M.C."/>
            <person name="Maeda N."/>
            <person name="Oyama R."/>
            <person name="Ravasi T."/>
            <person name="Lenhard B."/>
            <person name="Wells C."/>
            <person name="Kodzius R."/>
            <person name="Shimokawa K."/>
            <person name="Bajic V.B."/>
            <person name="Brenner S.E."/>
            <person name="Batalov S."/>
            <person name="Forrest A.R."/>
            <person name="Zavolan M."/>
            <person name="Davis M.J."/>
            <person name="Wilming L.G."/>
            <person name="Aidinis V."/>
            <person name="Allen J.E."/>
            <person name="Ambesi-Impiombato A."/>
            <person name="Apweiler R."/>
            <person name="Aturaliya R.N."/>
            <person name="Bailey T.L."/>
            <person name="Bansal M."/>
            <person name="Baxter L."/>
            <person name="Beisel K.W."/>
            <person name="Bersano T."/>
            <person name="Bono H."/>
            <person name="Chalk A.M."/>
            <person name="Chiu K.P."/>
            <person name="Choudhary V."/>
            <person name="Christoffels A."/>
            <person name="Clutterbuck D.R."/>
            <person name="Crowe M.L."/>
            <person name="Dalla E."/>
            <person name="Dalrymple B.P."/>
            <person name="de Bono B."/>
            <person name="Della Gatta G."/>
            <person name="di Bernardo D."/>
            <person name="Down T."/>
            <person name="Engstrom P."/>
            <person name="Fagiolini M."/>
            <person name="Faulkner G."/>
            <person name="Fletcher C.F."/>
            <person name="Fukushima T."/>
            <person name="Furuno M."/>
            <person name="Futaki S."/>
            <person name="Gariboldi M."/>
            <person name="Georgii-Hemming P."/>
            <person name="Gingeras T.R."/>
            <person name="Gojobori T."/>
            <person name="Green R.E."/>
            <person name="Gustincich S."/>
            <person name="Harbers M."/>
            <person name="Hayashi Y."/>
            <person name="Hensch T.K."/>
            <person name="Hirokawa N."/>
            <person name="Hill D."/>
            <person name="Huminiecki L."/>
            <person name="Iacono M."/>
            <person name="Ikeo K."/>
            <person name="Iwama A."/>
            <person name="Ishikawa T."/>
            <person name="Jakt M."/>
            <person name="Kanapin A."/>
            <person name="Katoh M."/>
            <person name="Kawasawa Y."/>
            <person name="Kelso J."/>
            <person name="Kitamura H."/>
            <person name="Kitano H."/>
            <person name="Kollias G."/>
            <person name="Krishnan S.P."/>
            <person name="Kruger A."/>
            <person name="Kummerfeld S.K."/>
            <person name="Kurochkin I.V."/>
            <person name="Lareau L.F."/>
            <person name="Lazarevic D."/>
            <person name="Lipovich L."/>
            <person name="Liu J."/>
            <person name="Liuni S."/>
            <person name="McWilliam S."/>
            <person name="Madan Babu M."/>
            <person name="Madera M."/>
            <person name="Marchionni L."/>
            <person name="Matsuda H."/>
            <person name="Matsuzawa S."/>
            <person name="Miki H."/>
            <person name="Mignone F."/>
            <person name="Miyake S."/>
            <person name="Morris K."/>
            <person name="Mottagui-Tabar S."/>
            <person name="Mulder N."/>
            <person name="Nakano N."/>
            <person name="Nakauchi H."/>
            <person name="Ng P."/>
            <person name="Nilsson R."/>
            <person name="Nishiguchi S."/>
            <person name="Nishikawa S."/>
            <person name="Nori F."/>
            <person name="Ohara O."/>
            <person name="Okazaki Y."/>
            <person name="Orlando V."/>
            <person name="Pang K.C."/>
            <person name="Pavan W.J."/>
            <person name="Pavesi G."/>
            <person name="Pesole G."/>
            <person name="Petrovsky N."/>
            <person name="Piazza S."/>
            <person name="Reed J."/>
            <person name="Reid J.F."/>
            <person name="Ring B.Z."/>
            <person name="Ringwald M."/>
            <person name="Rost B."/>
            <person name="Ruan Y."/>
            <person name="Salzberg S.L."/>
            <person name="Sandelin A."/>
            <person name="Schneider C."/>
            <person name="Schoenbach C."/>
            <person name="Sekiguchi K."/>
            <person name="Semple C.A."/>
            <person name="Seno S."/>
            <person name="Sessa L."/>
            <person name="Sheng Y."/>
            <person name="Shibata Y."/>
            <person name="Shimada H."/>
            <person name="Shimada K."/>
            <person name="Silva D."/>
            <person name="Sinclair B."/>
            <person name="Sperling S."/>
            <person name="Stupka E."/>
            <person name="Sugiura K."/>
            <person name="Sultana R."/>
            <person name="Takenaka Y."/>
            <person name="Taki K."/>
            <person name="Tammoja K."/>
            <person name="Tan S.L."/>
            <person name="Tang S."/>
            <person name="Taylor M.S."/>
            <person name="Tegner J."/>
            <person name="Teichmann S.A."/>
            <person name="Ueda H.R."/>
            <person name="van Nimwegen E."/>
            <person name="Verardo R."/>
            <person name="Wei C.L."/>
            <person name="Yagi K."/>
            <person name="Yamanishi H."/>
            <person name="Zabarovsky E."/>
            <person name="Zhu S."/>
            <person name="Zimmer A."/>
            <person name="Hide W."/>
            <person name="Bult C."/>
            <person name="Grimmond S.M."/>
            <person name="Teasdale R.D."/>
            <person name="Liu E.T."/>
            <person name="Brusic V."/>
            <person name="Quackenbush J."/>
            <person name="Wahlestedt C."/>
            <person name="Mattick J.S."/>
            <person name="Hume D.A."/>
            <person name="Kai C."/>
            <person name="Sasaki D."/>
            <person name="Tomaru Y."/>
            <person name="Fukuda S."/>
            <person name="Kanamori-Katayama M."/>
            <person name="Suzuki M."/>
            <person name="Aoki J."/>
            <person name="Arakawa T."/>
            <person name="Iida J."/>
            <person name="Imamura K."/>
            <person name="Itoh M."/>
            <person name="Kato T."/>
            <person name="Kawaji H."/>
            <person name="Kawagashira N."/>
            <person name="Kawashima T."/>
            <person name="Kojima M."/>
            <person name="Kondo S."/>
            <person name="Konno H."/>
            <person name="Nakano K."/>
            <person name="Ninomiya N."/>
            <person name="Nishio T."/>
            <person name="Okada M."/>
            <person name="Plessy C."/>
            <person name="Shibata K."/>
            <person name="Shiraki T."/>
            <person name="Suzuki S."/>
            <person name="Tagami M."/>
            <person name="Waki K."/>
            <person name="Watahiki A."/>
            <person name="Okamura-Oho Y."/>
            <person name="Suzuki H."/>
            <person name="Kawai J."/>
            <person name="Hayashizaki Y."/>
        </authorList>
    </citation>
    <scope>NUCLEOTIDE SEQUENCE [LARGE SCALE MRNA] (ISOFORM 1)</scope>
    <source>
        <strain>C57BL/6J</strain>
        <tissue>Bone marrow</tissue>
        <tissue>Cecum</tissue>
    </source>
</reference>
<reference key="6">
    <citation type="journal article" date="2004" name="Genome Res.">
        <title>The status, quality, and expansion of the NIH full-length cDNA project: the Mammalian Gene Collection (MGC).</title>
        <authorList>
            <consortium name="The MGC Project Team"/>
        </authorList>
    </citation>
    <scope>NUCLEOTIDE SEQUENCE [LARGE SCALE MRNA] (ISOFORM 1)</scope>
    <source>
        <strain>NMRI</strain>
        <tissue>Mammary tumor</tissue>
    </source>
</reference>
<reference key="7">
    <citation type="journal article" date="2005" name="J. Biol. Chem.">
        <title>Positive and negative regulation of nuclear factor-kappaB-mediated transcription by IkappaB-zeta, an inducible nuclear protein.</title>
        <authorList>
            <person name="Motoyama M."/>
            <person name="Yamazaki S."/>
            <person name="Eto-Kimura A."/>
            <person name="Takeshige K."/>
            <person name="Muta T."/>
        </authorList>
    </citation>
    <scope>NUCLEOTIDE SEQUENCE [MRNA] OF 195-450 (ISOFORM 3)</scope>
    <scope>ALTERNATIVE SPLICING</scope>
    <scope>FUNCTION IN NF-KAPPA-B ACTIVATION</scope>
    <scope>SUBCELLULAR LOCATION</scope>
    <scope>MUTAGENESIS OF LYS-163; ARG-164 AND LYS-177</scope>
</reference>
<reference key="8">
    <citation type="journal article" date="2004" name="Nature">
        <title>Regulation of Toll/IL-1-receptor-mediated gene expression by the inducible nuclear protein IkappaBzeta.</title>
        <authorList>
            <person name="Yamamoto M."/>
            <person name="Yamazaki S."/>
            <person name="Uematsu S."/>
            <person name="Sato S."/>
            <person name="Hemmi H."/>
            <person name="Hoshino K."/>
            <person name="Kaisho T."/>
            <person name="Kuwata H."/>
            <person name="Takeuchi O."/>
            <person name="Takeshige K."/>
            <person name="Saitoh T."/>
            <person name="Yamaoka S."/>
            <person name="Yamamoto N."/>
            <person name="Yamamoto S."/>
            <person name="Muta T."/>
            <person name="Takeda K."/>
            <person name="Akira S."/>
        </authorList>
    </citation>
    <scope>FUNCTION IN NF-KAPPA-B ACTIVATION</scope>
    <scope>DISRUPTION PHENOTYPE</scope>
    <scope>INTERACTION WITH NFKB1</scope>
    <scope>INDUCTION</scope>
</reference>
<reference key="9">
    <citation type="journal article" date="2007" name="Biochem. J.">
        <title>Crucial roles of binding sites for NF-kappaB and C/EBPs in IkappaB-zeta-mediated transcriptional activation.</title>
        <authorList>
            <person name="Matsuo S."/>
            <person name="Yamazaki S."/>
            <person name="Takeshige K."/>
            <person name="Muta T."/>
        </authorList>
    </citation>
    <scope>FUNCTION IN NF-KAPPA-B ACTIVATION</scope>
</reference>
<reference key="10">
    <citation type="journal article" date="2014" name="Nat. Immunol.">
        <title>Cleavage of roquin and regnase-1 by the paracaspase MALT1 releases their cooperatively repressed targets to promote T(H)17 differentiation.</title>
        <authorList>
            <person name="Jeltsch K.M."/>
            <person name="Hu D."/>
            <person name="Brenner S."/>
            <person name="Zoeller J."/>
            <person name="Heinz G.A."/>
            <person name="Nagel D."/>
            <person name="Vogel K.U."/>
            <person name="Rehage N."/>
            <person name="Warth S.C."/>
            <person name="Edelmann S.L."/>
            <person name="Gloury R."/>
            <person name="Martin N."/>
            <person name="Lohs C."/>
            <person name="Lech M."/>
            <person name="Stehklein J.E."/>
            <person name="Geerlof A."/>
            <person name="Kremmer E."/>
            <person name="Weber A."/>
            <person name="Anders H.J."/>
            <person name="Schmitz I."/>
            <person name="Schmidt-Supprian M."/>
            <person name="Fu M."/>
            <person name="Holtmann H."/>
            <person name="Krappmann D."/>
            <person name="Ruland J."/>
            <person name="Kallies A."/>
            <person name="Heikenwalder M."/>
            <person name="Heissmeyer V."/>
        </authorList>
    </citation>
    <scope>FUNCTION</scope>
</reference>
<reference key="11">
    <citation type="journal article" date="2014" name="EMBO J.">
        <title>Akirin2 is critical for inducing inflammatory genes by bridging IkappaB-zeta and the SWI/SNF complex.</title>
        <authorList>
            <person name="Tartey S."/>
            <person name="Matsushita K."/>
            <person name="Vandenbon A."/>
            <person name="Ori D."/>
            <person name="Imamura T."/>
            <person name="Mino T."/>
            <person name="Standley D.M."/>
            <person name="Hoffmann J.A."/>
            <person name="Reichhart J.M."/>
            <person name="Akira S."/>
            <person name="Takeuchi O."/>
        </authorList>
    </citation>
    <scope>FUNCTION</scope>
    <scope>INTERACTION WITH AKIRIN2</scope>
</reference>
<accession>Q9EST8</accession>
<accession>Q3TVL7</accession>
<accession>Q3TWK9</accession>
<accession>Q3U8Y9</accession>
<accession>Q3UCI2</accession>
<accession>Q3URP0</accession>
<accession>Q3UW99</accession>
<accession>Q5NT97</accession>
<accession>Q99NA4</accession>
<organism>
    <name type="scientific">Mus musculus</name>
    <name type="common">Mouse</name>
    <dbReference type="NCBI Taxonomy" id="10090"/>
    <lineage>
        <taxon>Eukaryota</taxon>
        <taxon>Metazoa</taxon>
        <taxon>Chordata</taxon>
        <taxon>Craniata</taxon>
        <taxon>Vertebrata</taxon>
        <taxon>Euteleostomi</taxon>
        <taxon>Mammalia</taxon>
        <taxon>Eutheria</taxon>
        <taxon>Euarchontoglires</taxon>
        <taxon>Glires</taxon>
        <taxon>Rodentia</taxon>
        <taxon>Myomorpha</taxon>
        <taxon>Muroidea</taxon>
        <taxon>Muridae</taxon>
        <taxon>Murinae</taxon>
        <taxon>Mus</taxon>
        <taxon>Mus</taxon>
    </lineage>
</organism>
<dbReference type="EMBL" id="AB020974">
    <property type="protein sequence ID" value="BAB18302.1"/>
    <property type="molecule type" value="mRNA"/>
</dbReference>
<dbReference type="EMBL" id="AB040458">
    <property type="protein sequence ID" value="BAB85809.1"/>
    <property type="molecule type" value="Genomic_DNA"/>
</dbReference>
<dbReference type="EMBL" id="AB026551">
    <property type="protein sequence ID" value="BAA95161.2"/>
    <property type="molecule type" value="mRNA"/>
</dbReference>
<dbReference type="EMBL" id="AB047549">
    <property type="protein sequence ID" value="BAB32782.1"/>
    <property type="molecule type" value="mRNA"/>
</dbReference>
<dbReference type="EMBL" id="AK082908">
    <property type="protein sequence ID" value="BAC38681.1"/>
    <property type="molecule type" value="mRNA"/>
</dbReference>
<dbReference type="EMBL" id="AK136509">
    <property type="protein sequence ID" value="BAE23017.1"/>
    <property type="molecule type" value="mRNA"/>
</dbReference>
<dbReference type="EMBL" id="AK141318">
    <property type="protein sequence ID" value="BAE24648.1"/>
    <property type="status" value="ALT_FRAME"/>
    <property type="molecule type" value="mRNA"/>
</dbReference>
<dbReference type="EMBL" id="AK150519">
    <property type="protein sequence ID" value="BAE29631.1"/>
    <property type="molecule type" value="mRNA"/>
</dbReference>
<dbReference type="EMBL" id="AK152016">
    <property type="protein sequence ID" value="BAE30878.1"/>
    <property type="molecule type" value="mRNA"/>
</dbReference>
<dbReference type="EMBL" id="AK159093">
    <property type="protein sequence ID" value="BAE34809.1"/>
    <property type="molecule type" value="mRNA"/>
</dbReference>
<dbReference type="EMBL" id="AK159171">
    <property type="protein sequence ID" value="BAE34871.1"/>
    <property type="molecule type" value="mRNA"/>
</dbReference>
<dbReference type="EMBL" id="AK159459">
    <property type="protein sequence ID" value="BAE35101.1"/>
    <property type="molecule type" value="mRNA"/>
</dbReference>
<dbReference type="EMBL" id="AK159645">
    <property type="protein sequence ID" value="BAE35257.1"/>
    <property type="molecule type" value="mRNA"/>
</dbReference>
<dbReference type="EMBL" id="AK159917">
    <property type="protein sequence ID" value="BAE35480.1"/>
    <property type="molecule type" value="mRNA"/>
</dbReference>
<dbReference type="EMBL" id="AK160065">
    <property type="protein sequence ID" value="BAE35601.1"/>
    <property type="molecule type" value="mRNA"/>
</dbReference>
<dbReference type="EMBL" id="BC058188">
    <property type="protein sequence ID" value="AAH58188.1"/>
    <property type="molecule type" value="mRNA"/>
</dbReference>
<dbReference type="EMBL" id="AB196497">
    <property type="protein sequence ID" value="BAD82955.1"/>
    <property type="molecule type" value="mRNA"/>
</dbReference>
<dbReference type="CCDS" id="CCDS28216.1">
    <molecule id="Q9EST8-1"/>
</dbReference>
<dbReference type="CCDS" id="CCDS49869.1">
    <molecule id="Q9EST8-2"/>
</dbReference>
<dbReference type="RefSeq" id="NP_001152866.1">
    <molecule id="Q9EST8-1"/>
    <property type="nucleotide sequence ID" value="NM_001159394.1"/>
</dbReference>
<dbReference type="RefSeq" id="NP_001152867.1">
    <molecule id="Q9EST8-2"/>
    <property type="nucleotide sequence ID" value="NM_001159395.2"/>
</dbReference>
<dbReference type="RefSeq" id="NP_085115.1">
    <molecule id="Q9EST8-1"/>
    <property type="nucleotide sequence ID" value="NM_030612.4"/>
</dbReference>
<dbReference type="SMR" id="Q9EST8"/>
<dbReference type="BioGRID" id="219820">
    <property type="interactions" value="7"/>
</dbReference>
<dbReference type="FunCoup" id="Q9EST8">
    <property type="interactions" value="1005"/>
</dbReference>
<dbReference type="IntAct" id="Q9EST8">
    <property type="interactions" value="6"/>
</dbReference>
<dbReference type="MINT" id="Q9EST8"/>
<dbReference type="STRING" id="10090.ENSMUSP00000041173"/>
<dbReference type="GlyGen" id="Q9EST8">
    <property type="glycosylation" value="1 site"/>
</dbReference>
<dbReference type="iPTMnet" id="Q9EST8"/>
<dbReference type="PhosphoSitePlus" id="Q9EST8"/>
<dbReference type="PaxDb" id="10090-ENSMUSP00000110102"/>
<dbReference type="ProteomicsDB" id="267223">
    <molecule id="Q9EST8-1"/>
</dbReference>
<dbReference type="ProteomicsDB" id="267224">
    <molecule id="Q9EST8-2"/>
</dbReference>
<dbReference type="ProteomicsDB" id="267225">
    <molecule id="Q9EST8-3"/>
</dbReference>
<dbReference type="Antibodypedia" id="2134">
    <property type="antibodies" value="199 antibodies from 26 providers"/>
</dbReference>
<dbReference type="DNASU" id="80859"/>
<dbReference type="Ensembl" id="ENSMUST00000036273.13">
    <molecule id="Q9EST8-1"/>
    <property type="protein sequence ID" value="ENSMUSP00000041173.7"/>
    <property type="gene ID" value="ENSMUSG00000035356.18"/>
</dbReference>
<dbReference type="Ensembl" id="ENSMUST00000096026.9">
    <molecule id="Q9EST8-2"/>
    <property type="protein sequence ID" value="ENSMUSP00000093726.3"/>
    <property type="gene ID" value="ENSMUSG00000035356.18"/>
</dbReference>
<dbReference type="Ensembl" id="ENSMUST00000114457.8">
    <molecule id="Q9EST8-2"/>
    <property type="protein sequence ID" value="ENSMUSP00000110101.2"/>
    <property type="gene ID" value="ENSMUSG00000035356.18"/>
</dbReference>
<dbReference type="Ensembl" id="ENSMUST00000114458.8">
    <molecule id="Q9EST8-1"/>
    <property type="protein sequence ID" value="ENSMUSP00000110102.2"/>
    <property type="gene ID" value="ENSMUSG00000035356.18"/>
</dbReference>
<dbReference type="GeneID" id="80859"/>
<dbReference type="KEGG" id="mmu:80859"/>
<dbReference type="UCSC" id="uc007zlm.2">
    <molecule id="Q9EST8-1"/>
    <property type="organism name" value="mouse"/>
</dbReference>
<dbReference type="AGR" id="MGI:1931595"/>
<dbReference type="CTD" id="64332"/>
<dbReference type="MGI" id="MGI:1931595">
    <property type="gene designation" value="Nfkbiz"/>
</dbReference>
<dbReference type="VEuPathDB" id="HostDB:ENSMUSG00000035356"/>
<dbReference type="eggNOG" id="KOG0504">
    <property type="taxonomic scope" value="Eukaryota"/>
</dbReference>
<dbReference type="GeneTree" id="ENSGT00940000153695"/>
<dbReference type="HOGENOM" id="CLU_030240_0_0_1"/>
<dbReference type="InParanoid" id="Q9EST8"/>
<dbReference type="OMA" id="QFSWMSP"/>
<dbReference type="OrthoDB" id="341259at2759"/>
<dbReference type="PhylomeDB" id="Q9EST8"/>
<dbReference type="TreeFam" id="TF330224"/>
<dbReference type="BioGRID-ORCS" id="80859">
    <property type="hits" value="4 hits in 79 CRISPR screens"/>
</dbReference>
<dbReference type="ChiTaRS" id="Nfkbiz">
    <property type="organism name" value="mouse"/>
</dbReference>
<dbReference type="PRO" id="PR:Q9EST8"/>
<dbReference type="Proteomes" id="UP000000589">
    <property type="component" value="Chromosome 16"/>
</dbReference>
<dbReference type="RNAct" id="Q9EST8">
    <property type="molecule type" value="protein"/>
</dbReference>
<dbReference type="Bgee" id="ENSMUSG00000035356">
    <property type="expression patterns" value="Expressed in granulocyte and 237 other cell types or tissues"/>
</dbReference>
<dbReference type="GO" id="GO:0036464">
    <property type="term" value="C:cytoplasmic ribonucleoprotein granule"/>
    <property type="evidence" value="ECO:0007669"/>
    <property type="project" value="Ensembl"/>
</dbReference>
<dbReference type="GO" id="GO:0016607">
    <property type="term" value="C:nuclear speck"/>
    <property type="evidence" value="ECO:0007669"/>
    <property type="project" value="Ensembl"/>
</dbReference>
<dbReference type="GO" id="GO:0005634">
    <property type="term" value="C:nucleus"/>
    <property type="evidence" value="ECO:0000314"/>
    <property type="project" value="MGI"/>
</dbReference>
<dbReference type="GO" id="GO:0070974">
    <property type="term" value="F:POU domain binding"/>
    <property type="evidence" value="ECO:0007669"/>
    <property type="project" value="InterPro"/>
</dbReference>
<dbReference type="GO" id="GO:0000978">
    <property type="term" value="F:RNA polymerase II cis-regulatory region sequence-specific DNA binding"/>
    <property type="evidence" value="ECO:0000314"/>
    <property type="project" value="MGI"/>
</dbReference>
<dbReference type="GO" id="GO:0003712">
    <property type="term" value="F:transcription coregulator activity"/>
    <property type="evidence" value="ECO:0000314"/>
    <property type="project" value="MGI"/>
</dbReference>
<dbReference type="GO" id="GO:0002250">
    <property type="term" value="P:adaptive immune response"/>
    <property type="evidence" value="ECO:0000314"/>
    <property type="project" value="MGI"/>
</dbReference>
<dbReference type="GO" id="GO:0042100">
    <property type="term" value="P:B cell proliferation"/>
    <property type="evidence" value="ECO:0000315"/>
    <property type="project" value="MGI"/>
</dbReference>
<dbReference type="GO" id="GO:1990117">
    <property type="term" value="P:B cell receptor apoptotic signaling pathway"/>
    <property type="evidence" value="ECO:0000314"/>
    <property type="project" value="MGI"/>
</dbReference>
<dbReference type="GO" id="GO:0050853">
    <property type="term" value="P:B cell receptor signaling pathway"/>
    <property type="evidence" value="ECO:0000314"/>
    <property type="project" value="MGI"/>
</dbReference>
<dbReference type="GO" id="GO:0071345">
    <property type="term" value="P:cellular response to cytokine stimulus"/>
    <property type="evidence" value="ECO:0000314"/>
    <property type="project" value="MGI"/>
</dbReference>
<dbReference type="GO" id="GO:0097398">
    <property type="term" value="P:cellular response to interleukin-17"/>
    <property type="evidence" value="ECO:0000314"/>
    <property type="project" value="MGI"/>
</dbReference>
<dbReference type="GO" id="GO:0071222">
    <property type="term" value="P:cellular response to lipopolysaccharide"/>
    <property type="evidence" value="ECO:0000315"/>
    <property type="project" value="MGI"/>
</dbReference>
<dbReference type="GO" id="GO:0071560">
    <property type="term" value="P:cellular response to transforming growth factor beta stimulus"/>
    <property type="evidence" value="ECO:0000315"/>
    <property type="project" value="MGI"/>
</dbReference>
<dbReference type="GO" id="GO:0006325">
    <property type="term" value="P:chromatin organization"/>
    <property type="evidence" value="ECO:0000315"/>
    <property type="project" value="MGI"/>
</dbReference>
<dbReference type="GO" id="GO:0006338">
    <property type="term" value="P:chromatin remodeling"/>
    <property type="evidence" value="ECO:0000314"/>
    <property type="project" value="MGI"/>
</dbReference>
<dbReference type="GO" id="GO:0002544">
    <property type="term" value="P:chronic inflammatory response"/>
    <property type="evidence" value="ECO:0000315"/>
    <property type="project" value="MGI"/>
</dbReference>
<dbReference type="GO" id="GO:0019221">
    <property type="term" value="P:cytokine-mediated signaling pathway"/>
    <property type="evidence" value="ECO:0000315"/>
    <property type="project" value="MGI"/>
</dbReference>
<dbReference type="GO" id="GO:0050829">
    <property type="term" value="P:defense response to Gram-negative bacterium"/>
    <property type="evidence" value="ECO:0000315"/>
    <property type="project" value="MGI"/>
</dbReference>
<dbReference type="GO" id="GO:1904019">
    <property type="term" value="P:epithelial cell apoptotic process"/>
    <property type="evidence" value="ECO:0000315"/>
    <property type="project" value="MGI"/>
</dbReference>
<dbReference type="GO" id="GO:0061436">
    <property type="term" value="P:establishment of skin barrier"/>
    <property type="evidence" value="ECO:0000315"/>
    <property type="project" value="MGI"/>
</dbReference>
<dbReference type="GO" id="GO:0097194">
    <property type="term" value="P:execution phase of apoptosis"/>
    <property type="evidence" value="ECO:0000315"/>
    <property type="project" value="MGI"/>
</dbReference>
<dbReference type="GO" id="GO:0010467">
    <property type="term" value="P:gene expression"/>
    <property type="evidence" value="ECO:0000314"/>
    <property type="project" value="MGI"/>
</dbReference>
<dbReference type="GO" id="GO:0048873">
    <property type="term" value="P:homeostasis of number of cells within a tissue"/>
    <property type="evidence" value="ECO:0000315"/>
    <property type="project" value="MGI"/>
</dbReference>
<dbReference type="GO" id="GO:0016064">
    <property type="term" value="P:immunoglobulin mediated immune response"/>
    <property type="evidence" value="ECO:0000315"/>
    <property type="project" value="MGI"/>
</dbReference>
<dbReference type="GO" id="GO:0006954">
    <property type="term" value="P:inflammatory response"/>
    <property type="evidence" value="ECO:0000314"/>
    <property type="project" value="MGI"/>
</dbReference>
<dbReference type="GO" id="GO:0090594">
    <property type="term" value="P:inflammatory response to wounding"/>
    <property type="evidence" value="ECO:0000314"/>
    <property type="project" value="MGI"/>
</dbReference>
<dbReference type="GO" id="GO:0045190">
    <property type="term" value="P:isotype switching"/>
    <property type="evidence" value="ECO:0000315"/>
    <property type="project" value="MGI"/>
</dbReference>
<dbReference type="GO" id="GO:0032980">
    <property type="term" value="P:keratinocyte activation"/>
    <property type="evidence" value="ECO:0000315"/>
    <property type="project" value="MGI"/>
</dbReference>
<dbReference type="GO" id="GO:0030216">
    <property type="term" value="P:keratinocyte differentiation"/>
    <property type="evidence" value="ECO:0000315"/>
    <property type="project" value="MGI"/>
</dbReference>
<dbReference type="GO" id="GO:0043616">
    <property type="term" value="P:keratinocyte proliferation"/>
    <property type="evidence" value="ECO:0000315"/>
    <property type="project" value="MGI"/>
</dbReference>
<dbReference type="GO" id="GO:0002285">
    <property type="term" value="P:lymphocyte activation involved in immune response"/>
    <property type="evidence" value="ECO:0000315"/>
    <property type="project" value="MGI"/>
</dbReference>
<dbReference type="GO" id="GO:0042789">
    <property type="term" value="P:mRNA transcription by RNA polymerase II"/>
    <property type="evidence" value="ECO:0000314"/>
    <property type="project" value="MGI"/>
</dbReference>
<dbReference type="GO" id="GO:0002317">
    <property type="term" value="P:plasma cell differentiation"/>
    <property type="evidence" value="ECO:0000315"/>
    <property type="project" value="MGI"/>
</dbReference>
<dbReference type="GO" id="GO:0050729">
    <property type="term" value="P:positive regulation of inflammatory response"/>
    <property type="evidence" value="ECO:0007669"/>
    <property type="project" value="Ensembl"/>
</dbReference>
<dbReference type="GO" id="GO:2000321">
    <property type="term" value="P:positive regulation of T-helper 17 cell differentiation"/>
    <property type="evidence" value="ECO:0000315"/>
    <property type="project" value="UniProtKB"/>
</dbReference>
<dbReference type="GO" id="GO:0045944">
    <property type="term" value="P:positive regulation of transcription by RNA polymerase II"/>
    <property type="evidence" value="ECO:0000314"/>
    <property type="project" value="MGI"/>
</dbReference>
<dbReference type="GO" id="GO:0050776">
    <property type="term" value="P:regulation of immune response"/>
    <property type="evidence" value="ECO:0000315"/>
    <property type="project" value="MGI"/>
</dbReference>
<dbReference type="GO" id="GO:0072718">
    <property type="term" value="P:response to cisplatin"/>
    <property type="evidence" value="ECO:0000314"/>
    <property type="project" value="MGI"/>
</dbReference>
<dbReference type="GO" id="GO:0034097">
    <property type="term" value="P:response to cytokine"/>
    <property type="evidence" value="ECO:0000315"/>
    <property type="project" value="MGI"/>
</dbReference>
<dbReference type="GO" id="GO:0051593">
    <property type="term" value="P:response to folic acid"/>
    <property type="evidence" value="ECO:0000314"/>
    <property type="project" value="MGI"/>
</dbReference>
<dbReference type="GO" id="GO:0140459">
    <property type="term" value="P:response to Gram-positive bacterium"/>
    <property type="evidence" value="ECO:0000315"/>
    <property type="project" value="MGI"/>
</dbReference>
<dbReference type="GO" id="GO:0032496">
    <property type="term" value="P:response to lipopolysaccharide"/>
    <property type="evidence" value="ECO:0000315"/>
    <property type="project" value="MGI"/>
</dbReference>
<dbReference type="GO" id="GO:0009410">
    <property type="term" value="P:response to xenobiotic stimulus"/>
    <property type="evidence" value="ECO:0000315"/>
    <property type="project" value="MGI"/>
</dbReference>
<dbReference type="GO" id="GO:0043588">
    <property type="term" value="P:skin development"/>
    <property type="evidence" value="ECO:0000315"/>
    <property type="project" value="MGI"/>
</dbReference>
<dbReference type="GO" id="GO:0098773">
    <property type="term" value="P:skin epidermis development"/>
    <property type="evidence" value="ECO:0000315"/>
    <property type="project" value="MGI"/>
</dbReference>
<dbReference type="GO" id="GO:0048536">
    <property type="term" value="P:spleen development"/>
    <property type="evidence" value="ECO:0000315"/>
    <property type="project" value="MGI"/>
</dbReference>
<dbReference type="GO" id="GO:0030217">
    <property type="term" value="P:T cell differentiation"/>
    <property type="evidence" value="ECO:0000315"/>
    <property type="project" value="MGI"/>
</dbReference>
<dbReference type="GO" id="GO:0002456">
    <property type="term" value="P:T cell mediated immunity"/>
    <property type="evidence" value="ECO:0000315"/>
    <property type="project" value="MGI"/>
</dbReference>
<dbReference type="GO" id="GO:0050852">
    <property type="term" value="P:T cell receptor signaling pathway"/>
    <property type="evidence" value="ECO:0000315"/>
    <property type="project" value="UniProtKB"/>
</dbReference>
<dbReference type="GO" id="GO:0045063">
    <property type="term" value="P:T-helper 1 cell differentiation"/>
    <property type="evidence" value="ECO:0000315"/>
    <property type="project" value="MGI"/>
</dbReference>
<dbReference type="GO" id="GO:0072539">
    <property type="term" value="P:T-helper 17 cell differentiation"/>
    <property type="evidence" value="ECO:0000315"/>
    <property type="project" value="MGI"/>
</dbReference>
<dbReference type="GO" id="GO:0002224">
    <property type="term" value="P:toll-like receptor signaling pathway"/>
    <property type="evidence" value="ECO:0000314"/>
    <property type="project" value="MGI"/>
</dbReference>
<dbReference type="GO" id="GO:0006366">
    <property type="term" value="P:transcription by RNA polymerase II"/>
    <property type="evidence" value="ECO:0000315"/>
    <property type="project" value="MGI"/>
</dbReference>
<dbReference type="GO" id="GO:0070897">
    <property type="term" value="P:transcription preinitiation complex assembly"/>
    <property type="evidence" value="ECO:0000315"/>
    <property type="project" value="MGI"/>
</dbReference>
<dbReference type="FunFam" id="1.25.40.20:FF:000179">
    <property type="entry name" value="NF-kappa-B inhibitor zeta isoform X2"/>
    <property type="match status" value="1"/>
</dbReference>
<dbReference type="FunFam" id="1.25.40.20:FF:000188">
    <property type="entry name" value="NF-kappa-B inhibitor zeta isoform X2"/>
    <property type="match status" value="1"/>
</dbReference>
<dbReference type="Gene3D" id="1.25.40.20">
    <property type="entry name" value="Ankyrin repeat-containing domain"/>
    <property type="match status" value="2"/>
</dbReference>
<dbReference type="InterPro" id="IPR002110">
    <property type="entry name" value="Ankyrin_rpt"/>
</dbReference>
<dbReference type="InterPro" id="IPR036770">
    <property type="entry name" value="Ankyrin_rpt-contain_sf"/>
</dbReference>
<dbReference type="InterPro" id="IPR047571">
    <property type="entry name" value="OCA"/>
</dbReference>
<dbReference type="PANTHER" id="PTHR24124">
    <property type="entry name" value="ANKYRIN REPEAT FAMILY A"/>
    <property type="match status" value="1"/>
</dbReference>
<dbReference type="PANTHER" id="PTHR24124:SF5">
    <property type="entry name" value="NF-KAPPA-B INHIBITOR ZETA"/>
    <property type="match status" value="1"/>
</dbReference>
<dbReference type="Pfam" id="PF12796">
    <property type="entry name" value="Ank_2"/>
    <property type="match status" value="2"/>
</dbReference>
<dbReference type="PRINTS" id="PR01415">
    <property type="entry name" value="ANKYRIN"/>
</dbReference>
<dbReference type="SMART" id="SM00248">
    <property type="entry name" value="ANK"/>
    <property type="match status" value="6"/>
</dbReference>
<dbReference type="SUPFAM" id="SSF48403">
    <property type="entry name" value="Ankyrin repeat"/>
    <property type="match status" value="1"/>
</dbReference>
<dbReference type="PROSITE" id="PS50297">
    <property type="entry name" value="ANK_REP_REGION"/>
    <property type="match status" value="1"/>
</dbReference>
<dbReference type="PROSITE" id="PS50088">
    <property type="entry name" value="ANK_REPEAT"/>
    <property type="match status" value="3"/>
</dbReference>
<dbReference type="PROSITE" id="PS52003">
    <property type="entry name" value="OCA"/>
    <property type="match status" value="1"/>
</dbReference>
<feature type="chain" id="PRO_0000323578" description="NF-kappa-B inhibitor zeta">
    <location>
        <begin position="1"/>
        <end position="728"/>
    </location>
</feature>
<feature type="domain" description="OCA" evidence="2">
    <location>
        <begin position="107"/>
        <end position="129"/>
    </location>
</feature>
<feature type="repeat" description="ANK 1">
    <location>
        <begin position="453"/>
        <end position="482"/>
    </location>
</feature>
<feature type="repeat" description="ANK 2">
    <location>
        <begin position="489"/>
        <end position="518"/>
    </location>
</feature>
<feature type="repeat" description="ANK 3">
    <location>
        <begin position="522"/>
        <end position="551"/>
    </location>
</feature>
<feature type="repeat" description="ANK 4">
    <location>
        <begin position="561"/>
        <end position="589"/>
    </location>
</feature>
<feature type="repeat" description="ANK 5">
    <location>
        <begin position="591"/>
        <end position="617"/>
    </location>
</feature>
<feature type="repeat" description="ANK 6">
    <location>
        <begin position="622"/>
        <end position="651"/>
    </location>
</feature>
<feature type="repeat" description="ANK 7">
    <location>
        <begin position="658"/>
        <end position="691"/>
    </location>
</feature>
<feature type="region of interest" description="Disordered" evidence="3">
    <location>
        <begin position="45"/>
        <end position="107"/>
    </location>
</feature>
<feature type="region of interest" description="Disordered" evidence="3">
    <location>
        <begin position="241"/>
        <end position="334"/>
    </location>
</feature>
<feature type="region of interest" description="Required for transcriptional activity">
    <location>
        <begin position="329"/>
        <end position="403"/>
    </location>
</feature>
<feature type="region of interest" description="Interaction with NFKB1/p50">
    <location>
        <begin position="414"/>
        <end position="728"/>
    </location>
</feature>
<feature type="short sequence motif" description="Nuclear localization signal">
    <location>
        <begin position="163"/>
        <end position="178"/>
    </location>
</feature>
<feature type="compositionally biased region" description="Low complexity" evidence="3">
    <location>
        <begin position="53"/>
        <end position="82"/>
    </location>
</feature>
<feature type="compositionally biased region" description="Basic and acidic residues" evidence="3">
    <location>
        <begin position="83"/>
        <end position="96"/>
    </location>
</feature>
<feature type="compositionally biased region" description="Polar residues" evidence="3">
    <location>
        <begin position="241"/>
        <end position="250"/>
    </location>
</feature>
<feature type="compositionally biased region" description="Polar residues" evidence="3">
    <location>
        <begin position="268"/>
        <end position="288"/>
    </location>
</feature>
<feature type="compositionally biased region" description="Low complexity" evidence="3">
    <location>
        <begin position="303"/>
        <end position="315"/>
    </location>
</feature>
<feature type="compositionally biased region" description="Polar residues" evidence="3">
    <location>
        <begin position="316"/>
        <end position="330"/>
    </location>
</feature>
<feature type="splice variant" id="VSP_032024" description="In isoform 2." evidence="13">
    <location>
        <begin position="1"/>
        <end position="99"/>
    </location>
</feature>
<feature type="splice variant" id="VSP_032025" description="In isoform 3." evidence="14">
    <location>
        <begin position="236"/>
        <end position="429"/>
    </location>
</feature>
<feature type="mutagenesis site" description="Abolishes nuclear localization." evidence="8">
    <original>K</original>
    <variation>A</variation>
    <location>
        <position position="163"/>
    </location>
</feature>
<feature type="mutagenesis site" description="Abolishes nuclear localization." evidence="8">
    <original>R</original>
    <variation>A</variation>
    <location>
        <position position="164"/>
    </location>
</feature>
<feature type="mutagenesis site" description="Abolishes nuclear localization." evidence="8">
    <original>K</original>
    <variation>A</variation>
    <location>
        <position position="177"/>
    </location>
</feature>
<feature type="sequence conflict" description="In Ref. 5; BAE30878." evidence="15" ref="5">
    <original>N</original>
    <variation>K</variation>
    <location>
        <position position="31"/>
    </location>
</feature>
<feature type="sequence conflict" description="In Ref. 5; BAE35257/BAE34809." evidence="15" ref="5">
    <original>G</original>
    <variation>D</variation>
    <location>
        <position position="87"/>
    </location>
</feature>
<feature type="sequence conflict" description="In Ref. 5; BAE35257/BAE34809." evidence="15" ref="5">
    <original>K</original>
    <variation>E</variation>
    <location>
        <position position="142"/>
    </location>
</feature>
<feature type="sequence conflict" description="In Ref. 5; BAE29631." evidence="15" ref="5">
    <original>K</original>
    <variation>E</variation>
    <location>
        <position position="208"/>
    </location>
</feature>
<feature type="sequence conflict" description="In Ref. 5; BAE35601." evidence="15" ref="5">
    <original>K</original>
    <variation>R</variation>
    <location>
        <position position="223"/>
    </location>
</feature>
<feature type="sequence conflict" description="In Ref. 3; BAE24648." evidence="15" ref="3">
    <original>M</original>
    <variation>I</variation>
    <location>
        <position position="239"/>
    </location>
</feature>
<feature type="sequence conflict" description="In Ref. 5; BAE29631." evidence="15" ref="5">
    <original>S</original>
    <variation>G</variation>
    <location>
        <position position="273"/>
    </location>
</feature>
<feature type="sequence conflict" description="In Ref. 5; BAE35257/BAE34809." evidence="15" ref="5">
    <original>A</original>
    <variation>V</variation>
    <location>
        <position position="461"/>
    </location>
</feature>
<feature type="sequence conflict" description="In Ref. 5; BAE35257/BAE34809." evidence="15" ref="5">
    <original>R</original>
    <variation>K</variation>
    <location>
        <position position="475"/>
    </location>
</feature>
<feature type="sequence conflict" description="In Ref. 3; BAE23017." evidence="15" ref="3">
    <original>S</original>
    <variation>G</variation>
    <location>
        <position position="600"/>
    </location>
</feature>
<protein>
    <recommendedName>
        <fullName>NF-kappa-B inhibitor zeta</fullName>
    </recommendedName>
    <alternativeName>
        <fullName>I-kappa-B-zeta</fullName>
        <shortName>IkB-zeta</shortName>
        <shortName>IkappaBzeta</shortName>
    </alternativeName>
    <alternativeName>
        <fullName>IL-1 inducible nuclear ankyrin-repeat protein</fullName>
        <shortName>INAP</shortName>
    </alternativeName>
    <alternativeName>
        <fullName evidence="12">Molecule possessing ankyrin repeats induced by lipopolysaccharide</fullName>
        <shortName evidence="12">MAIL</shortName>
    </alternativeName>
</protein>
<keyword id="KW-0010">Activator</keyword>
<keyword id="KW-0025">Alternative splicing</keyword>
<keyword id="KW-0040">ANK repeat</keyword>
<keyword id="KW-0539">Nucleus</keyword>
<keyword id="KW-1185">Reference proteome</keyword>
<keyword id="KW-0677">Repeat</keyword>
<keyword id="KW-0804">Transcription</keyword>
<keyword id="KW-0805">Transcription regulation</keyword>
<sequence>MIVDKLLDDSRGGEGLLDAAGDCGLMTSPLNLAYFYGASPPSAPGAGDTGYLSAVPSAPGSPGSDSSDFSSTSSVSSCGAVESRPRGGARAERPQVEPHMGVGRQQRGPFQGVRVKNSVKELLLHIRSNKQKASGQPVDEFKTQSVNIEQLTDLKSAVSAVGKRKGPDPLSDGPVCKRPALLPSHFVTSPQTPTPGESMEDVRHSESKLDSSAALLQNIINIKNECNPVSLNTVQVSWMSPTVPQNSPRDQCQDFHGGQAFSPPQKYQPFQVSGSPQMMDQASMYQYSPQTQNMQQPPPLPPQQQHQQNYPHNSPLQFSPYSRMSQSPKYDSNLFDTHEPQFCTGQSFVSLLTGPGEPESLAVPVPAPTSIPPQTETQLQTFSLMPSNACEAVVGVHDVGSHSLGTSLSLQNIMGSPMNTTQLGKSFFQWQVEQEESKLANIPQDQFLARDGDGDTFLHIAVAQGRRALSYVLARKMNALHMLDIKEHNGQSAFQVAVAANQHLIVQDLVNLGAQVNTTDCWGRTPLHVCAEKGHSQVLQAIQKGAVRSNQFVDLEATNYDGLTPLHCAVVAHNAVVHELQRNRQSHSPEVQDLLLRNKSLVDTIKCLIQMGAAVEAKDRKSGRTALHLAAEEANLELIRLFLELPSCLSFVNAKAYNGNTALHVAASLQYRVTQLDAVRLLMRKGADPSTRNLENEQPVHLVPDGPVGEQIRRILKGKSIQQRAPPY</sequence>
<name>IKBZ_MOUSE</name>
<proteinExistence type="evidence at protein level"/>
<gene>
    <name type="primary">Nfkbiz</name>
    <name type="synonym">Inap</name>
    <name evidence="12" type="synonym">Mail</name>
</gene>